<protein>
    <recommendedName>
        <fullName evidence="1">Elongation factor 4 1</fullName>
        <shortName evidence="1">EF-4 1</shortName>
        <ecNumber evidence="1">3.6.5.n1</ecNumber>
    </recommendedName>
    <alternativeName>
        <fullName evidence="1">Ribosomal back-translocase LepA 1</fullName>
    </alternativeName>
</protein>
<organism>
    <name type="scientific">Rhodopirellula baltica (strain DSM 10527 / NCIMB 13988 / SH1)</name>
    <dbReference type="NCBI Taxonomy" id="243090"/>
    <lineage>
        <taxon>Bacteria</taxon>
        <taxon>Pseudomonadati</taxon>
        <taxon>Planctomycetota</taxon>
        <taxon>Planctomycetia</taxon>
        <taxon>Pirellulales</taxon>
        <taxon>Pirellulaceae</taxon>
        <taxon>Rhodopirellula</taxon>
    </lineage>
</organism>
<accession>Q7UX15</accession>
<comment type="function">
    <text evidence="1">Required for accurate and efficient protein synthesis under certain stress conditions. May act as a fidelity factor of the translation reaction, by catalyzing a one-codon backward translocation of tRNAs on improperly translocated ribosomes. Back-translocation proceeds from a post-translocation (POST) complex to a pre-translocation (PRE) complex, thus giving elongation factor G a second chance to translocate the tRNAs correctly. Binds to ribosomes in a GTP-dependent manner.</text>
</comment>
<comment type="catalytic activity">
    <reaction evidence="1">
        <text>GTP + H2O = GDP + phosphate + H(+)</text>
        <dbReference type="Rhea" id="RHEA:19669"/>
        <dbReference type="ChEBI" id="CHEBI:15377"/>
        <dbReference type="ChEBI" id="CHEBI:15378"/>
        <dbReference type="ChEBI" id="CHEBI:37565"/>
        <dbReference type="ChEBI" id="CHEBI:43474"/>
        <dbReference type="ChEBI" id="CHEBI:58189"/>
        <dbReference type="EC" id="3.6.5.n1"/>
    </reaction>
</comment>
<comment type="subcellular location">
    <subcellularLocation>
        <location evidence="1">Cell inner membrane</location>
        <topology evidence="1">Peripheral membrane protein</topology>
        <orientation evidence="1">Cytoplasmic side</orientation>
    </subcellularLocation>
</comment>
<comment type="similarity">
    <text evidence="1">Belongs to the TRAFAC class translation factor GTPase superfamily. Classic translation factor GTPase family. LepA subfamily.</text>
</comment>
<evidence type="ECO:0000255" key="1">
    <source>
        <dbReference type="HAMAP-Rule" id="MF_00071"/>
    </source>
</evidence>
<reference key="1">
    <citation type="journal article" date="2003" name="Proc. Natl. Acad. Sci. U.S.A.">
        <title>Complete genome sequence of the marine planctomycete Pirellula sp. strain 1.</title>
        <authorList>
            <person name="Gloeckner F.O."/>
            <person name="Kube M."/>
            <person name="Bauer M."/>
            <person name="Teeling H."/>
            <person name="Lombardot T."/>
            <person name="Ludwig W."/>
            <person name="Gade D."/>
            <person name="Beck A."/>
            <person name="Borzym K."/>
            <person name="Heitmann K."/>
            <person name="Rabus R."/>
            <person name="Schlesner H."/>
            <person name="Amann R."/>
            <person name="Reinhardt R."/>
        </authorList>
    </citation>
    <scope>NUCLEOTIDE SEQUENCE [LARGE SCALE GENOMIC DNA]</scope>
    <source>
        <strain>DSM 10527 / NCIMB 13988 / SH1</strain>
    </source>
</reference>
<feature type="chain" id="PRO_0000176330" description="Elongation factor 4 1">
    <location>
        <begin position="1"/>
        <end position="604"/>
    </location>
</feature>
<feature type="domain" description="tr-type G">
    <location>
        <begin position="10"/>
        <end position="191"/>
    </location>
</feature>
<feature type="binding site" evidence="1">
    <location>
        <begin position="22"/>
        <end position="27"/>
    </location>
    <ligand>
        <name>GTP</name>
        <dbReference type="ChEBI" id="CHEBI:37565"/>
    </ligand>
</feature>
<feature type="binding site" evidence="1">
    <location>
        <begin position="138"/>
        <end position="141"/>
    </location>
    <ligand>
        <name>GTP</name>
        <dbReference type="ChEBI" id="CHEBI:37565"/>
    </ligand>
</feature>
<gene>
    <name evidence="1" type="primary">lepA1</name>
    <name type="ordered locus">RB1630</name>
</gene>
<sequence>MASKSSRSQEHIRNFCIIAHIDHGKSTLADRLLESTGTVDNRGKKTQMLDDLALEQQRGITIKARAVAMRYKRDGIEYELNLIDTPGHVDFQYEVSRSLACCEGALLLVDAFQGVEAQTVANAFAAMEHDLTIVPVINKIDLIHARPDEVAEEMMNSLGTDPDECKRVSAKTGEGVAALLDAIVDSVPAPTGDPKAVLQAMVFDSNYDDFRGAITYIRVMQGTVRKGQKIKFLRAGSVHDVVELGQFAPSRVPCDELVAGQVGYLICNIKSLGDVHIGDTISIAGNDPAPALPGYDRPKRMVYCGLFPSDGQDFSELRDALERLAVNDPSFEFEPETSDALGFGFRCGFLGLLHMEIVQQRLEQESDIDLVQTAPNVTYEITDKRGVTKNIHKPQDVPDPGDIEKFCQPIVRCNVIVPEEYIGPVMKLCQERRGIQKGHEVLGASRAMLTYDIPLAEVIYDLHDRIKSCTRGYGTLDYEMVGYEEADLCRLDILVNGNRVDALSVVCHRADADRRGRAVAKKLKSEIERHMFEVAVQAAIGSRVIARETVPAMRKNVTAKCYGGDITRKRKLLQKQKEGKKRMKAVGNVEISQKAFMAVLTDGE</sequence>
<keyword id="KW-0997">Cell inner membrane</keyword>
<keyword id="KW-1003">Cell membrane</keyword>
<keyword id="KW-0342">GTP-binding</keyword>
<keyword id="KW-0378">Hydrolase</keyword>
<keyword id="KW-0472">Membrane</keyword>
<keyword id="KW-0547">Nucleotide-binding</keyword>
<keyword id="KW-0648">Protein biosynthesis</keyword>
<keyword id="KW-1185">Reference proteome</keyword>
<dbReference type="EC" id="3.6.5.n1" evidence="1"/>
<dbReference type="EMBL" id="BX294135">
    <property type="protein sequence ID" value="CAD72197.1"/>
    <property type="molecule type" value="Genomic_DNA"/>
</dbReference>
<dbReference type="RefSeq" id="NP_864516.1">
    <property type="nucleotide sequence ID" value="NC_005027.1"/>
</dbReference>
<dbReference type="RefSeq" id="WP_011118463.1">
    <property type="nucleotide sequence ID" value="NC_005027.1"/>
</dbReference>
<dbReference type="SMR" id="Q7UX15"/>
<dbReference type="STRING" id="243090.RB1630"/>
<dbReference type="EnsemblBacteria" id="CAD72197">
    <property type="protein sequence ID" value="CAD72197"/>
    <property type="gene ID" value="RB1630"/>
</dbReference>
<dbReference type="KEGG" id="rba:RB1630"/>
<dbReference type="PATRIC" id="fig|243090.15.peg.762"/>
<dbReference type="eggNOG" id="COG0481">
    <property type="taxonomic scope" value="Bacteria"/>
</dbReference>
<dbReference type="HOGENOM" id="CLU_009995_3_3_0"/>
<dbReference type="InParanoid" id="Q7UX15"/>
<dbReference type="OrthoDB" id="9804431at2"/>
<dbReference type="Proteomes" id="UP000001025">
    <property type="component" value="Chromosome"/>
</dbReference>
<dbReference type="GO" id="GO:0005886">
    <property type="term" value="C:plasma membrane"/>
    <property type="evidence" value="ECO:0007669"/>
    <property type="project" value="UniProtKB-SubCell"/>
</dbReference>
<dbReference type="GO" id="GO:0005525">
    <property type="term" value="F:GTP binding"/>
    <property type="evidence" value="ECO:0007669"/>
    <property type="project" value="UniProtKB-UniRule"/>
</dbReference>
<dbReference type="GO" id="GO:0003924">
    <property type="term" value="F:GTPase activity"/>
    <property type="evidence" value="ECO:0007669"/>
    <property type="project" value="UniProtKB-UniRule"/>
</dbReference>
<dbReference type="GO" id="GO:0043022">
    <property type="term" value="F:ribosome binding"/>
    <property type="evidence" value="ECO:0000318"/>
    <property type="project" value="GO_Central"/>
</dbReference>
<dbReference type="GO" id="GO:0003746">
    <property type="term" value="F:translation elongation factor activity"/>
    <property type="evidence" value="ECO:0007669"/>
    <property type="project" value="UniProtKB-UniRule"/>
</dbReference>
<dbReference type="GO" id="GO:0045727">
    <property type="term" value="P:positive regulation of translation"/>
    <property type="evidence" value="ECO:0000318"/>
    <property type="project" value="GO_Central"/>
</dbReference>
<dbReference type="CDD" id="cd03699">
    <property type="entry name" value="EF4_II"/>
    <property type="match status" value="1"/>
</dbReference>
<dbReference type="CDD" id="cd16260">
    <property type="entry name" value="EF4_III"/>
    <property type="match status" value="1"/>
</dbReference>
<dbReference type="CDD" id="cd01890">
    <property type="entry name" value="LepA"/>
    <property type="match status" value="1"/>
</dbReference>
<dbReference type="CDD" id="cd03709">
    <property type="entry name" value="lepA_C"/>
    <property type="match status" value="1"/>
</dbReference>
<dbReference type="FunFam" id="3.40.50.300:FF:000078">
    <property type="entry name" value="Elongation factor 4"/>
    <property type="match status" value="1"/>
</dbReference>
<dbReference type="FunFam" id="2.40.30.10:FF:000015">
    <property type="entry name" value="Translation factor GUF1, mitochondrial"/>
    <property type="match status" value="1"/>
</dbReference>
<dbReference type="FunFam" id="3.30.70.240:FF:000007">
    <property type="entry name" value="Translation factor GUF1, mitochondrial"/>
    <property type="match status" value="1"/>
</dbReference>
<dbReference type="FunFam" id="3.30.70.2570:FF:000001">
    <property type="entry name" value="Translation factor GUF1, mitochondrial"/>
    <property type="match status" value="1"/>
</dbReference>
<dbReference type="FunFam" id="3.30.70.870:FF:000004">
    <property type="entry name" value="Translation factor GUF1, mitochondrial"/>
    <property type="match status" value="1"/>
</dbReference>
<dbReference type="Gene3D" id="3.30.70.240">
    <property type="match status" value="1"/>
</dbReference>
<dbReference type="Gene3D" id="3.30.70.2570">
    <property type="entry name" value="Elongation factor 4, C-terminal domain"/>
    <property type="match status" value="1"/>
</dbReference>
<dbReference type="Gene3D" id="3.30.70.870">
    <property type="entry name" value="Elongation Factor G (Translational Gtpase), domain 3"/>
    <property type="match status" value="1"/>
</dbReference>
<dbReference type="Gene3D" id="3.40.50.300">
    <property type="entry name" value="P-loop containing nucleotide triphosphate hydrolases"/>
    <property type="match status" value="1"/>
</dbReference>
<dbReference type="Gene3D" id="2.40.30.10">
    <property type="entry name" value="Translation factors"/>
    <property type="match status" value="1"/>
</dbReference>
<dbReference type="HAMAP" id="MF_00071">
    <property type="entry name" value="LepA"/>
    <property type="match status" value="1"/>
</dbReference>
<dbReference type="InterPro" id="IPR006297">
    <property type="entry name" value="EF-4"/>
</dbReference>
<dbReference type="InterPro" id="IPR035647">
    <property type="entry name" value="EFG_III/V"/>
</dbReference>
<dbReference type="InterPro" id="IPR000640">
    <property type="entry name" value="EFG_V-like"/>
</dbReference>
<dbReference type="InterPro" id="IPR004161">
    <property type="entry name" value="EFTu-like_2"/>
</dbReference>
<dbReference type="InterPro" id="IPR038363">
    <property type="entry name" value="LepA_C_sf"/>
</dbReference>
<dbReference type="InterPro" id="IPR013842">
    <property type="entry name" value="LepA_CTD"/>
</dbReference>
<dbReference type="InterPro" id="IPR035654">
    <property type="entry name" value="LepA_IV"/>
</dbReference>
<dbReference type="InterPro" id="IPR027417">
    <property type="entry name" value="P-loop_NTPase"/>
</dbReference>
<dbReference type="InterPro" id="IPR005225">
    <property type="entry name" value="Small_GTP-bd"/>
</dbReference>
<dbReference type="InterPro" id="IPR000795">
    <property type="entry name" value="T_Tr_GTP-bd_dom"/>
</dbReference>
<dbReference type="InterPro" id="IPR009000">
    <property type="entry name" value="Transl_B-barrel_sf"/>
</dbReference>
<dbReference type="NCBIfam" id="TIGR01393">
    <property type="entry name" value="lepA"/>
    <property type="match status" value="1"/>
</dbReference>
<dbReference type="NCBIfam" id="TIGR00231">
    <property type="entry name" value="small_GTP"/>
    <property type="match status" value="1"/>
</dbReference>
<dbReference type="PANTHER" id="PTHR43512:SF4">
    <property type="entry name" value="TRANSLATION FACTOR GUF1 HOMOLOG, CHLOROPLASTIC"/>
    <property type="match status" value="1"/>
</dbReference>
<dbReference type="PANTHER" id="PTHR43512">
    <property type="entry name" value="TRANSLATION FACTOR GUF1-RELATED"/>
    <property type="match status" value="1"/>
</dbReference>
<dbReference type="Pfam" id="PF00679">
    <property type="entry name" value="EFG_C"/>
    <property type="match status" value="1"/>
</dbReference>
<dbReference type="Pfam" id="PF00009">
    <property type="entry name" value="GTP_EFTU"/>
    <property type="match status" value="1"/>
</dbReference>
<dbReference type="Pfam" id="PF03144">
    <property type="entry name" value="GTP_EFTU_D2"/>
    <property type="match status" value="1"/>
</dbReference>
<dbReference type="Pfam" id="PF06421">
    <property type="entry name" value="LepA_C"/>
    <property type="match status" value="1"/>
</dbReference>
<dbReference type="PRINTS" id="PR00315">
    <property type="entry name" value="ELONGATNFCT"/>
</dbReference>
<dbReference type="SMART" id="SM00838">
    <property type="entry name" value="EFG_C"/>
    <property type="match status" value="1"/>
</dbReference>
<dbReference type="SUPFAM" id="SSF54980">
    <property type="entry name" value="EF-G C-terminal domain-like"/>
    <property type="match status" value="2"/>
</dbReference>
<dbReference type="SUPFAM" id="SSF52540">
    <property type="entry name" value="P-loop containing nucleoside triphosphate hydrolases"/>
    <property type="match status" value="1"/>
</dbReference>
<dbReference type="SUPFAM" id="SSF50447">
    <property type="entry name" value="Translation proteins"/>
    <property type="match status" value="1"/>
</dbReference>
<dbReference type="PROSITE" id="PS51722">
    <property type="entry name" value="G_TR_2"/>
    <property type="match status" value="1"/>
</dbReference>
<proteinExistence type="inferred from homology"/>
<name>LEPA1_RHOBA</name>